<name>YIDD_BRUA2</name>
<dbReference type="EMBL" id="AM040264">
    <property type="protein sequence ID" value="CAJ11051.1"/>
    <property type="molecule type" value="Genomic_DNA"/>
</dbReference>
<dbReference type="STRING" id="359391.BAB1_1095"/>
<dbReference type="KEGG" id="bmf:BAB1_1095"/>
<dbReference type="PATRIC" id="fig|359391.11.peg.1807"/>
<dbReference type="HOGENOM" id="CLU_144811_0_1_5"/>
<dbReference type="PhylomeDB" id="Q2YQ05"/>
<dbReference type="Proteomes" id="UP000002719">
    <property type="component" value="Chromosome I"/>
</dbReference>
<dbReference type="GO" id="GO:0005886">
    <property type="term" value="C:plasma membrane"/>
    <property type="evidence" value="ECO:0007669"/>
    <property type="project" value="UniProtKB-SubCell"/>
</dbReference>
<dbReference type="HAMAP" id="MF_00386">
    <property type="entry name" value="UPF0161_YidD"/>
    <property type="match status" value="1"/>
</dbReference>
<dbReference type="InterPro" id="IPR002696">
    <property type="entry name" value="Membr_insert_effic_factor_YidD"/>
</dbReference>
<dbReference type="NCBIfam" id="TIGR00278">
    <property type="entry name" value="membrane protein insertion efficiency factor YidD"/>
    <property type="match status" value="1"/>
</dbReference>
<dbReference type="PANTHER" id="PTHR33383">
    <property type="entry name" value="MEMBRANE PROTEIN INSERTION EFFICIENCY FACTOR-RELATED"/>
    <property type="match status" value="1"/>
</dbReference>
<dbReference type="PANTHER" id="PTHR33383:SF1">
    <property type="entry name" value="MEMBRANE PROTEIN INSERTION EFFICIENCY FACTOR-RELATED"/>
    <property type="match status" value="1"/>
</dbReference>
<dbReference type="Pfam" id="PF01809">
    <property type="entry name" value="YidD"/>
    <property type="match status" value="1"/>
</dbReference>
<dbReference type="SMART" id="SM01234">
    <property type="entry name" value="Haemolytic"/>
    <property type="match status" value="1"/>
</dbReference>
<feature type="chain" id="PRO_0000253085" description="Putative membrane protein insertion efficiency factor">
    <location>
        <begin position="1"/>
        <end position="123"/>
    </location>
</feature>
<feature type="region of interest" description="Disordered" evidence="2">
    <location>
        <begin position="1"/>
        <end position="23"/>
    </location>
</feature>
<comment type="function">
    <text evidence="1">Could be involved in insertion of integral membrane proteins into the membrane.</text>
</comment>
<comment type="subcellular location">
    <subcellularLocation>
        <location evidence="1">Cell inner membrane</location>
        <topology evidence="1">Peripheral membrane protein</topology>
        <orientation evidence="1">Cytoplasmic side</orientation>
    </subcellularLocation>
</comment>
<comment type="similarity">
    <text evidence="1">Belongs to the UPF0161 family.</text>
</comment>
<organism>
    <name type="scientific">Brucella abortus (strain 2308)</name>
    <dbReference type="NCBI Taxonomy" id="359391"/>
    <lineage>
        <taxon>Bacteria</taxon>
        <taxon>Pseudomonadati</taxon>
        <taxon>Pseudomonadota</taxon>
        <taxon>Alphaproteobacteria</taxon>
        <taxon>Hyphomicrobiales</taxon>
        <taxon>Brucellaceae</taxon>
        <taxon>Brucella/Ochrobactrum group</taxon>
        <taxon>Brucella</taxon>
    </lineage>
</organism>
<protein>
    <recommendedName>
        <fullName evidence="1">Putative membrane protein insertion efficiency factor</fullName>
    </recommendedName>
</protein>
<reference key="1">
    <citation type="journal article" date="2005" name="Infect. Immun.">
        <title>Whole-genome analyses of speciation events in pathogenic Brucellae.</title>
        <authorList>
            <person name="Chain P.S."/>
            <person name="Comerci D.J."/>
            <person name="Tolmasky M.E."/>
            <person name="Larimer F.W."/>
            <person name="Malfatti S.A."/>
            <person name="Vergez L.M."/>
            <person name="Aguero F."/>
            <person name="Land M.L."/>
            <person name="Ugalde R.A."/>
            <person name="Garcia E."/>
        </authorList>
    </citation>
    <scope>NUCLEOTIDE SEQUENCE [LARGE SCALE GENOMIC DNA]</scope>
    <source>
        <strain>2308</strain>
    </source>
</reference>
<sequence>MGSCGGKHTGKGAPKPYSRNFTDPWRKTPGRLFGTALIRFYQITLSSLIGNSCRHLPTCSEYAYEAIARHGLWRGGWMGFFRVVRCGPFGTHGFDPVPRELSPDLKWYMPWRYWRCSASRIGK</sequence>
<evidence type="ECO:0000255" key="1">
    <source>
        <dbReference type="HAMAP-Rule" id="MF_00386"/>
    </source>
</evidence>
<evidence type="ECO:0000256" key="2">
    <source>
        <dbReference type="SAM" id="MobiDB-lite"/>
    </source>
</evidence>
<proteinExistence type="inferred from homology"/>
<accession>Q2YQ05</accession>
<gene>
    <name type="ordered locus">BAB1_1095</name>
</gene>
<keyword id="KW-0997">Cell inner membrane</keyword>
<keyword id="KW-1003">Cell membrane</keyword>
<keyword id="KW-0472">Membrane</keyword>
<keyword id="KW-1185">Reference proteome</keyword>